<protein>
    <recommendedName>
        <fullName evidence="1">Holliday junction branch migration complex subunit RuvB</fullName>
        <ecNumber evidence="1">3.6.4.-</ecNumber>
    </recommendedName>
</protein>
<name>RUVB_ROSCS</name>
<gene>
    <name evidence="1" type="primary">ruvB</name>
    <name type="ordered locus">Rcas_3053</name>
</gene>
<keyword id="KW-0067">ATP-binding</keyword>
<keyword id="KW-0963">Cytoplasm</keyword>
<keyword id="KW-0227">DNA damage</keyword>
<keyword id="KW-0233">DNA recombination</keyword>
<keyword id="KW-0234">DNA repair</keyword>
<keyword id="KW-0238">DNA-binding</keyword>
<keyword id="KW-0378">Hydrolase</keyword>
<keyword id="KW-0547">Nucleotide-binding</keyword>
<keyword id="KW-1185">Reference proteome</keyword>
<dbReference type="EC" id="3.6.4.-" evidence="1"/>
<dbReference type="EMBL" id="CP000804">
    <property type="protein sequence ID" value="ABU59107.1"/>
    <property type="molecule type" value="Genomic_DNA"/>
</dbReference>
<dbReference type="RefSeq" id="WP_012121531.1">
    <property type="nucleotide sequence ID" value="NC_009767.1"/>
</dbReference>
<dbReference type="SMR" id="A7NNH1"/>
<dbReference type="STRING" id="383372.Rcas_3053"/>
<dbReference type="KEGG" id="rca:Rcas_3053"/>
<dbReference type="eggNOG" id="COG2255">
    <property type="taxonomic scope" value="Bacteria"/>
</dbReference>
<dbReference type="HOGENOM" id="CLU_055599_1_0_0"/>
<dbReference type="OrthoDB" id="9804478at2"/>
<dbReference type="Proteomes" id="UP000000263">
    <property type="component" value="Chromosome"/>
</dbReference>
<dbReference type="GO" id="GO:0005737">
    <property type="term" value="C:cytoplasm"/>
    <property type="evidence" value="ECO:0007669"/>
    <property type="project" value="UniProtKB-SubCell"/>
</dbReference>
<dbReference type="GO" id="GO:0048476">
    <property type="term" value="C:Holliday junction resolvase complex"/>
    <property type="evidence" value="ECO:0007669"/>
    <property type="project" value="UniProtKB-UniRule"/>
</dbReference>
<dbReference type="GO" id="GO:0005524">
    <property type="term" value="F:ATP binding"/>
    <property type="evidence" value="ECO:0007669"/>
    <property type="project" value="UniProtKB-UniRule"/>
</dbReference>
<dbReference type="GO" id="GO:0016887">
    <property type="term" value="F:ATP hydrolysis activity"/>
    <property type="evidence" value="ECO:0007669"/>
    <property type="project" value="InterPro"/>
</dbReference>
<dbReference type="GO" id="GO:0000400">
    <property type="term" value="F:four-way junction DNA binding"/>
    <property type="evidence" value="ECO:0007669"/>
    <property type="project" value="UniProtKB-UniRule"/>
</dbReference>
<dbReference type="GO" id="GO:0009378">
    <property type="term" value="F:four-way junction helicase activity"/>
    <property type="evidence" value="ECO:0007669"/>
    <property type="project" value="InterPro"/>
</dbReference>
<dbReference type="GO" id="GO:0006310">
    <property type="term" value="P:DNA recombination"/>
    <property type="evidence" value="ECO:0007669"/>
    <property type="project" value="UniProtKB-UniRule"/>
</dbReference>
<dbReference type="GO" id="GO:0006281">
    <property type="term" value="P:DNA repair"/>
    <property type="evidence" value="ECO:0007669"/>
    <property type="project" value="UniProtKB-UniRule"/>
</dbReference>
<dbReference type="CDD" id="cd00009">
    <property type="entry name" value="AAA"/>
    <property type="match status" value="1"/>
</dbReference>
<dbReference type="Gene3D" id="1.10.8.60">
    <property type="match status" value="1"/>
</dbReference>
<dbReference type="Gene3D" id="3.40.50.300">
    <property type="entry name" value="P-loop containing nucleotide triphosphate hydrolases"/>
    <property type="match status" value="1"/>
</dbReference>
<dbReference type="Gene3D" id="1.10.10.10">
    <property type="entry name" value="Winged helix-like DNA-binding domain superfamily/Winged helix DNA-binding domain"/>
    <property type="match status" value="1"/>
</dbReference>
<dbReference type="HAMAP" id="MF_00016">
    <property type="entry name" value="DNA_HJ_migration_RuvB"/>
    <property type="match status" value="1"/>
</dbReference>
<dbReference type="InterPro" id="IPR003593">
    <property type="entry name" value="AAA+_ATPase"/>
</dbReference>
<dbReference type="InterPro" id="IPR041445">
    <property type="entry name" value="AAA_lid_4"/>
</dbReference>
<dbReference type="InterPro" id="IPR004605">
    <property type="entry name" value="DNA_helicase_Holl-junc_RuvB"/>
</dbReference>
<dbReference type="InterPro" id="IPR027417">
    <property type="entry name" value="P-loop_NTPase"/>
</dbReference>
<dbReference type="InterPro" id="IPR008824">
    <property type="entry name" value="RuvB-like_N"/>
</dbReference>
<dbReference type="InterPro" id="IPR008823">
    <property type="entry name" value="RuvB_C"/>
</dbReference>
<dbReference type="InterPro" id="IPR036388">
    <property type="entry name" value="WH-like_DNA-bd_sf"/>
</dbReference>
<dbReference type="InterPro" id="IPR036390">
    <property type="entry name" value="WH_DNA-bd_sf"/>
</dbReference>
<dbReference type="NCBIfam" id="NF000868">
    <property type="entry name" value="PRK00080.1"/>
    <property type="match status" value="1"/>
</dbReference>
<dbReference type="NCBIfam" id="TIGR00635">
    <property type="entry name" value="ruvB"/>
    <property type="match status" value="1"/>
</dbReference>
<dbReference type="PANTHER" id="PTHR42848">
    <property type="match status" value="1"/>
</dbReference>
<dbReference type="PANTHER" id="PTHR42848:SF1">
    <property type="entry name" value="HOLLIDAY JUNCTION BRANCH MIGRATION COMPLEX SUBUNIT RUVB"/>
    <property type="match status" value="1"/>
</dbReference>
<dbReference type="Pfam" id="PF17864">
    <property type="entry name" value="AAA_lid_4"/>
    <property type="match status" value="1"/>
</dbReference>
<dbReference type="Pfam" id="PF05491">
    <property type="entry name" value="RuvB_C"/>
    <property type="match status" value="1"/>
</dbReference>
<dbReference type="Pfam" id="PF05496">
    <property type="entry name" value="RuvB_N"/>
    <property type="match status" value="1"/>
</dbReference>
<dbReference type="SMART" id="SM00382">
    <property type="entry name" value="AAA"/>
    <property type="match status" value="1"/>
</dbReference>
<dbReference type="SUPFAM" id="SSF52540">
    <property type="entry name" value="P-loop containing nucleoside triphosphate hydrolases"/>
    <property type="match status" value="1"/>
</dbReference>
<dbReference type="SUPFAM" id="SSF46785">
    <property type="entry name" value="Winged helix' DNA-binding domain"/>
    <property type="match status" value="1"/>
</dbReference>
<organism>
    <name type="scientific">Roseiflexus castenholzii (strain DSM 13941 / HLO8)</name>
    <dbReference type="NCBI Taxonomy" id="383372"/>
    <lineage>
        <taxon>Bacteria</taxon>
        <taxon>Bacillati</taxon>
        <taxon>Chloroflexota</taxon>
        <taxon>Chloroflexia</taxon>
        <taxon>Chloroflexales</taxon>
        <taxon>Roseiflexineae</taxon>
        <taxon>Roseiflexaceae</taxon>
        <taxon>Roseiflexus</taxon>
    </lineage>
</organism>
<proteinExistence type="inferred from homology"/>
<sequence length="347" mass="38339">MSDERVVTPRAGEEDQQIEKSLRPRRLAEFIGQEKVVEQLRIAIAAAKGRGEPLDHTLLYGPPGLGKTSLAGVLANEMEVNIKLTSGPAIERAGDLAALLTNLQKDDILFIDEIHRLNRAIEEVLYPAMEDFALDIMVGKGPGARSLRLKLPRFTVVGATTRLALLTSPLRDRFGSVHRLEFYSVDALYEIVMRSARILGVVCTPEGAREIAARARGTPRIVNRLLRRVRDYAQVIGDGIITLDVARDALAKLEVDHLGLDENDRRLLRAIIDLFGGGPVGLSTLAASLAEEVDAIEDVYEPFLLQLGFLQRTPRGRIATRRAYEHLGVPYVERSVDNGAEQGRLWT</sequence>
<evidence type="ECO:0000255" key="1">
    <source>
        <dbReference type="HAMAP-Rule" id="MF_00016"/>
    </source>
</evidence>
<feature type="chain" id="PRO_1000074095" description="Holliday junction branch migration complex subunit RuvB">
    <location>
        <begin position="1"/>
        <end position="347"/>
    </location>
</feature>
<feature type="region of interest" description="Large ATPase domain (RuvB-L)" evidence="1">
    <location>
        <begin position="1"/>
        <end position="183"/>
    </location>
</feature>
<feature type="region of interest" description="Small ATPAse domain (RuvB-S)" evidence="1">
    <location>
        <begin position="184"/>
        <end position="254"/>
    </location>
</feature>
<feature type="region of interest" description="Head domain (RuvB-H)" evidence="1">
    <location>
        <begin position="257"/>
        <end position="347"/>
    </location>
</feature>
<feature type="binding site" evidence="1">
    <location>
        <position position="22"/>
    </location>
    <ligand>
        <name>ATP</name>
        <dbReference type="ChEBI" id="CHEBI:30616"/>
    </ligand>
</feature>
<feature type="binding site" evidence="1">
    <location>
        <position position="23"/>
    </location>
    <ligand>
        <name>ATP</name>
        <dbReference type="ChEBI" id="CHEBI:30616"/>
    </ligand>
</feature>
<feature type="binding site" evidence="1">
    <location>
        <position position="64"/>
    </location>
    <ligand>
        <name>ATP</name>
        <dbReference type="ChEBI" id="CHEBI:30616"/>
    </ligand>
</feature>
<feature type="binding site" evidence="1">
    <location>
        <position position="67"/>
    </location>
    <ligand>
        <name>ATP</name>
        <dbReference type="ChEBI" id="CHEBI:30616"/>
    </ligand>
</feature>
<feature type="binding site" evidence="1">
    <location>
        <position position="68"/>
    </location>
    <ligand>
        <name>ATP</name>
        <dbReference type="ChEBI" id="CHEBI:30616"/>
    </ligand>
</feature>
<feature type="binding site" evidence="1">
    <location>
        <position position="68"/>
    </location>
    <ligand>
        <name>Mg(2+)</name>
        <dbReference type="ChEBI" id="CHEBI:18420"/>
    </ligand>
</feature>
<feature type="binding site" evidence="1">
    <location>
        <position position="69"/>
    </location>
    <ligand>
        <name>ATP</name>
        <dbReference type="ChEBI" id="CHEBI:30616"/>
    </ligand>
</feature>
<feature type="binding site" evidence="1">
    <location>
        <begin position="130"/>
        <end position="132"/>
    </location>
    <ligand>
        <name>ATP</name>
        <dbReference type="ChEBI" id="CHEBI:30616"/>
    </ligand>
</feature>
<feature type="binding site" evidence="1">
    <location>
        <position position="173"/>
    </location>
    <ligand>
        <name>ATP</name>
        <dbReference type="ChEBI" id="CHEBI:30616"/>
    </ligand>
</feature>
<feature type="binding site" evidence="1">
    <location>
        <position position="183"/>
    </location>
    <ligand>
        <name>ATP</name>
        <dbReference type="ChEBI" id="CHEBI:30616"/>
    </ligand>
</feature>
<feature type="binding site" evidence="1">
    <location>
        <position position="220"/>
    </location>
    <ligand>
        <name>ATP</name>
        <dbReference type="ChEBI" id="CHEBI:30616"/>
    </ligand>
</feature>
<feature type="binding site" evidence="1">
    <location>
        <position position="312"/>
    </location>
    <ligand>
        <name>DNA</name>
        <dbReference type="ChEBI" id="CHEBI:16991"/>
    </ligand>
</feature>
<feature type="binding site" evidence="1">
    <location>
        <position position="317"/>
    </location>
    <ligand>
        <name>DNA</name>
        <dbReference type="ChEBI" id="CHEBI:16991"/>
    </ligand>
</feature>
<accession>A7NNH1</accession>
<comment type="function">
    <text evidence="1">The RuvA-RuvB-RuvC complex processes Holliday junction (HJ) DNA during genetic recombination and DNA repair, while the RuvA-RuvB complex plays an important role in the rescue of blocked DNA replication forks via replication fork reversal (RFR). RuvA specifically binds to HJ cruciform DNA, conferring on it an open structure. The RuvB hexamer acts as an ATP-dependent pump, pulling dsDNA into and through the RuvAB complex. RuvB forms 2 homohexamers on either side of HJ DNA bound by 1 or 2 RuvA tetramers; 4 subunits per hexamer contact DNA at a time. Coordinated motions by a converter formed by DNA-disengaged RuvB subunits stimulates ATP hydrolysis and nucleotide exchange. Immobilization of the converter enables RuvB to convert the ATP-contained energy into a lever motion, pulling 2 nucleotides of DNA out of the RuvA tetramer per ATP hydrolyzed, thus driving DNA branch migration. The RuvB motors rotate together with the DNA substrate, which together with the progressing nucleotide cycle form the mechanistic basis for DNA recombination by continuous HJ branch migration. Branch migration allows RuvC to scan DNA until it finds its consensus sequence, where it cleaves and resolves cruciform DNA.</text>
</comment>
<comment type="catalytic activity">
    <reaction evidence="1">
        <text>ATP + H2O = ADP + phosphate + H(+)</text>
        <dbReference type="Rhea" id="RHEA:13065"/>
        <dbReference type="ChEBI" id="CHEBI:15377"/>
        <dbReference type="ChEBI" id="CHEBI:15378"/>
        <dbReference type="ChEBI" id="CHEBI:30616"/>
        <dbReference type="ChEBI" id="CHEBI:43474"/>
        <dbReference type="ChEBI" id="CHEBI:456216"/>
    </reaction>
</comment>
<comment type="subunit">
    <text evidence="1">Homohexamer. Forms an RuvA(8)-RuvB(12)-Holliday junction (HJ) complex. HJ DNA is sandwiched between 2 RuvA tetramers; dsDNA enters through RuvA and exits via RuvB. An RuvB hexamer assembles on each DNA strand where it exits the tetramer. Each RuvB hexamer is contacted by two RuvA subunits (via domain III) on 2 adjacent RuvB subunits; this complex drives branch migration. In the full resolvosome a probable DNA-RuvA(4)-RuvB(12)-RuvC(2) complex forms which resolves the HJ.</text>
</comment>
<comment type="subcellular location">
    <subcellularLocation>
        <location evidence="1">Cytoplasm</location>
    </subcellularLocation>
</comment>
<comment type="domain">
    <text evidence="1">Has 3 domains, the large (RuvB-L) and small ATPase (RuvB-S) domains and the C-terminal head (RuvB-H) domain. The head domain binds DNA, while the ATPase domains jointly bind ATP, ADP or are empty depending on the state of the subunit in the translocation cycle. During a single DNA translocation step the structure of each domain remains the same, but their relative positions change.</text>
</comment>
<comment type="similarity">
    <text evidence="1">Belongs to the RuvB family.</text>
</comment>
<reference key="1">
    <citation type="submission" date="2007-08" db="EMBL/GenBank/DDBJ databases">
        <title>Complete sequence of Roseiflexus castenholzii DSM 13941.</title>
        <authorList>
            <consortium name="US DOE Joint Genome Institute"/>
            <person name="Copeland A."/>
            <person name="Lucas S."/>
            <person name="Lapidus A."/>
            <person name="Barry K."/>
            <person name="Glavina del Rio T."/>
            <person name="Dalin E."/>
            <person name="Tice H."/>
            <person name="Pitluck S."/>
            <person name="Thompson L.S."/>
            <person name="Brettin T."/>
            <person name="Bruce D."/>
            <person name="Detter J.C."/>
            <person name="Han C."/>
            <person name="Tapia R."/>
            <person name="Schmutz J."/>
            <person name="Larimer F."/>
            <person name="Land M."/>
            <person name="Hauser L."/>
            <person name="Kyrpides N."/>
            <person name="Mikhailova N."/>
            <person name="Bryant D.A."/>
            <person name="Hanada S."/>
            <person name="Tsukatani Y."/>
            <person name="Richardson P."/>
        </authorList>
    </citation>
    <scope>NUCLEOTIDE SEQUENCE [LARGE SCALE GENOMIC DNA]</scope>
    <source>
        <strain>DSM 13941 / HLO8</strain>
    </source>
</reference>